<feature type="chain" id="PRO_1000016419" description="Histidine--tRNA ligase">
    <location>
        <begin position="1"/>
        <end position="428"/>
    </location>
</feature>
<dbReference type="EC" id="6.1.1.21" evidence="1"/>
<dbReference type="EMBL" id="CT573326">
    <property type="protein sequence ID" value="CAK13925.1"/>
    <property type="molecule type" value="Genomic_DNA"/>
</dbReference>
<dbReference type="RefSeq" id="WP_011532348.1">
    <property type="nucleotide sequence ID" value="NC_008027.1"/>
</dbReference>
<dbReference type="SMR" id="Q1IEI0"/>
<dbReference type="STRING" id="384676.PSEEN1022"/>
<dbReference type="GeneID" id="32804317"/>
<dbReference type="KEGG" id="pen:PSEEN1022"/>
<dbReference type="eggNOG" id="COG0124">
    <property type="taxonomic scope" value="Bacteria"/>
</dbReference>
<dbReference type="HOGENOM" id="CLU_025113_1_0_6"/>
<dbReference type="OrthoDB" id="9800814at2"/>
<dbReference type="Proteomes" id="UP000000658">
    <property type="component" value="Chromosome"/>
</dbReference>
<dbReference type="GO" id="GO:0005737">
    <property type="term" value="C:cytoplasm"/>
    <property type="evidence" value="ECO:0007669"/>
    <property type="project" value="UniProtKB-SubCell"/>
</dbReference>
<dbReference type="GO" id="GO:0005524">
    <property type="term" value="F:ATP binding"/>
    <property type="evidence" value="ECO:0007669"/>
    <property type="project" value="UniProtKB-UniRule"/>
</dbReference>
<dbReference type="GO" id="GO:0004821">
    <property type="term" value="F:histidine-tRNA ligase activity"/>
    <property type="evidence" value="ECO:0007669"/>
    <property type="project" value="UniProtKB-UniRule"/>
</dbReference>
<dbReference type="GO" id="GO:0006427">
    <property type="term" value="P:histidyl-tRNA aminoacylation"/>
    <property type="evidence" value="ECO:0007669"/>
    <property type="project" value="UniProtKB-UniRule"/>
</dbReference>
<dbReference type="CDD" id="cd00773">
    <property type="entry name" value="HisRS-like_core"/>
    <property type="match status" value="1"/>
</dbReference>
<dbReference type="CDD" id="cd00859">
    <property type="entry name" value="HisRS_anticodon"/>
    <property type="match status" value="1"/>
</dbReference>
<dbReference type="FunFam" id="3.30.930.10:FF:000005">
    <property type="entry name" value="Histidine--tRNA ligase"/>
    <property type="match status" value="1"/>
</dbReference>
<dbReference type="Gene3D" id="3.40.50.800">
    <property type="entry name" value="Anticodon-binding domain"/>
    <property type="match status" value="1"/>
</dbReference>
<dbReference type="Gene3D" id="3.30.930.10">
    <property type="entry name" value="Bira Bifunctional Protein, Domain 2"/>
    <property type="match status" value="1"/>
</dbReference>
<dbReference type="HAMAP" id="MF_00127">
    <property type="entry name" value="His_tRNA_synth"/>
    <property type="match status" value="1"/>
</dbReference>
<dbReference type="InterPro" id="IPR006195">
    <property type="entry name" value="aa-tRNA-synth_II"/>
</dbReference>
<dbReference type="InterPro" id="IPR045864">
    <property type="entry name" value="aa-tRNA-synth_II/BPL/LPL"/>
</dbReference>
<dbReference type="InterPro" id="IPR004154">
    <property type="entry name" value="Anticodon-bd"/>
</dbReference>
<dbReference type="InterPro" id="IPR036621">
    <property type="entry name" value="Anticodon-bd_dom_sf"/>
</dbReference>
<dbReference type="InterPro" id="IPR015807">
    <property type="entry name" value="His-tRNA-ligase"/>
</dbReference>
<dbReference type="InterPro" id="IPR041715">
    <property type="entry name" value="HisRS-like_core"/>
</dbReference>
<dbReference type="InterPro" id="IPR004516">
    <property type="entry name" value="HisRS/HisZ"/>
</dbReference>
<dbReference type="InterPro" id="IPR033656">
    <property type="entry name" value="HisRS_anticodon"/>
</dbReference>
<dbReference type="NCBIfam" id="TIGR00442">
    <property type="entry name" value="hisS"/>
    <property type="match status" value="1"/>
</dbReference>
<dbReference type="PANTHER" id="PTHR43707:SF1">
    <property type="entry name" value="HISTIDINE--TRNA LIGASE, MITOCHONDRIAL-RELATED"/>
    <property type="match status" value="1"/>
</dbReference>
<dbReference type="PANTHER" id="PTHR43707">
    <property type="entry name" value="HISTIDYL-TRNA SYNTHETASE"/>
    <property type="match status" value="1"/>
</dbReference>
<dbReference type="Pfam" id="PF03129">
    <property type="entry name" value="HGTP_anticodon"/>
    <property type="match status" value="1"/>
</dbReference>
<dbReference type="Pfam" id="PF13393">
    <property type="entry name" value="tRNA-synt_His"/>
    <property type="match status" value="1"/>
</dbReference>
<dbReference type="PIRSF" id="PIRSF001549">
    <property type="entry name" value="His-tRNA_synth"/>
    <property type="match status" value="1"/>
</dbReference>
<dbReference type="SUPFAM" id="SSF52954">
    <property type="entry name" value="Class II aaRS ABD-related"/>
    <property type="match status" value="1"/>
</dbReference>
<dbReference type="SUPFAM" id="SSF55681">
    <property type="entry name" value="Class II aaRS and biotin synthetases"/>
    <property type="match status" value="1"/>
</dbReference>
<dbReference type="PROSITE" id="PS50862">
    <property type="entry name" value="AA_TRNA_LIGASE_II"/>
    <property type="match status" value="1"/>
</dbReference>
<proteinExistence type="inferred from homology"/>
<keyword id="KW-0030">Aminoacyl-tRNA synthetase</keyword>
<keyword id="KW-0067">ATP-binding</keyword>
<keyword id="KW-0963">Cytoplasm</keyword>
<keyword id="KW-0436">Ligase</keyword>
<keyword id="KW-0547">Nucleotide-binding</keyword>
<keyword id="KW-0648">Protein biosynthesis</keyword>
<organism>
    <name type="scientific">Pseudomonas entomophila (strain L48)</name>
    <dbReference type="NCBI Taxonomy" id="384676"/>
    <lineage>
        <taxon>Bacteria</taxon>
        <taxon>Pseudomonadati</taxon>
        <taxon>Pseudomonadota</taxon>
        <taxon>Gammaproteobacteria</taxon>
        <taxon>Pseudomonadales</taxon>
        <taxon>Pseudomonadaceae</taxon>
        <taxon>Pseudomonas</taxon>
    </lineage>
</organism>
<comment type="catalytic activity">
    <reaction evidence="1">
        <text>tRNA(His) + L-histidine + ATP = L-histidyl-tRNA(His) + AMP + diphosphate + H(+)</text>
        <dbReference type="Rhea" id="RHEA:17313"/>
        <dbReference type="Rhea" id="RHEA-COMP:9665"/>
        <dbReference type="Rhea" id="RHEA-COMP:9689"/>
        <dbReference type="ChEBI" id="CHEBI:15378"/>
        <dbReference type="ChEBI" id="CHEBI:30616"/>
        <dbReference type="ChEBI" id="CHEBI:33019"/>
        <dbReference type="ChEBI" id="CHEBI:57595"/>
        <dbReference type="ChEBI" id="CHEBI:78442"/>
        <dbReference type="ChEBI" id="CHEBI:78527"/>
        <dbReference type="ChEBI" id="CHEBI:456215"/>
        <dbReference type="EC" id="6.1.1.21"/>
    </reaction>
</comment>
<comment type="subunit">
    <text evidence="1">Homodimer.</text>
</comment>
<comment type="subcellular location">
    <subcellularLocation>
        <location evidence="1">Cytoplasm</location>
    </subcellularLocation>
</comment>
<comment type="similarity">
    <text evidence="1">Belongs to the class-II aminoacyl-tRNA synthetase family.</text>
</comment>
<sequence length="428" mass="47502">MSKSLQAIRGMNDILPDQSPLWRYFEGTVAGLLDSYGYSQIRTPIVEFTELFKRSIGEVTDIVEKEMYTFQDNKDSLTLRPEGTAACVRAVLEHGIIGNGQVQKLWYVGPMFRHERPQLGRYRQFHQIGVEVFNLAGPDIDAELIMLTWRLWALLGIQDAVTLELNSLGTSEARARYRDALVEFLSQRIDQLDEDSQRRLKSNPLRILDSKNEGTQAALVGAPKLEEYLDEESRVHFEGVKARLDAAGIPFVINTKLVRGLDYYSKTVFEWVTDKLGAQGTVCAGGRYDGLVEQMGGKPTAGVGFAMGIERLLLLIETLGQVPESISRTIDVYLCAFGEQAELAGLKISEQLRDRLPNLRLAVNAGGGNFKNQFKKADKSGALFALILGDDELAKQEIGVKPLRGQGEQQNIAWDALAAHLETAIAQA</sequence>
<reference key="1">
    <citation type="journal article" date="2006" name="Nat. Biotechnol.">
        <title>Complete genome sequence of the entomopathogenic and metabolically versatile soil bacterium Pseudomonas entomophila.</title>
        <authorList>
            <person name="Vodovar N."/>
            <person name="Vallenet D."/>
            <person name="Cruveiller S."/>
            <person name="Rouy Z."/>
            <person name="Barbe V."/>
            <person name="Acosta C."/>
            <person name="Cattolico L."/>
            <person name="Jubin C."/>
            <person name="Lajus A."/>
            <person name="Segurens B."/>
            <person name="Vacherie B."/>
            <person name="Wincker P."/>
            <person name="Weissenbach J."/>
            <person name="Lemaitre B."/>
            <person name="Medigue C."/>
            <person name="Boccard F."/>
        </authorList>
    </citation>
    <scope>NUCLEOTIDE SEQUENCE [LARGE SCALE GENOMIC DNA]</scope>
    <source>
        <strain>L48</strain>
    </source>
</reference>
<name>SYH_PSEE4</name>
<evidence type="ECO:0000255" key="1">
    <source>
        <dbReference type="HAMAP-Rule" id="MF_00127"/>
    </source>
</evidence>
<accession>Q1IEI0</accession>
<gene>
    <name evidence="1" type="primary">hisS</name>
    <name type="ordered locus">PSEEN1022</name>
</gene>
<protein>
    <recommendedName>
        <fullName evidence="1">Histidine--tRNA ligase</fullName>
        <ecNumber evidence="1">6.1.1.21</ecNumber>
    </recommendedName>
    <alternativeName>
        <fullName evidence="1">Histidyl-tRNA synthetase</fullName>
        <shortName evidence="1">HisRS</shortName>
    </alternativeName>
</protein>